<gene>
    <name type="primary">VATP-P1</name>
</gene>
<comment type="function">
    <text>Proton-conducting pore forming subunit of the membrane integral V0 complex of vacuolar ATPase. V-ATPase is responsible for acidifying a variety of intracellular compartments in eukaryotic cells.</text>
</comment>
<comment type="subunit">
    <text>V-ATPase is a heteromultimeric enzyme composed of a peripheral catalytic V1 complex (main components: subunits A, B, C, D, E, and F) attached to an integral membrane V0 proton pore complex (main component: the proteolipid protein; which is present as a hexamer that forms the proton-conducting pore).</text>
</comment>
<comment type="subcellular location">
    <subcellularLocation>
        <location>Vacuole membrane</location>
        <topology>Multi-pass membrane protein</topology>
    </subcellularLocation>
    <text>Tonoplast.</text>
</comment>
<comment type="similarity">
    <text evidence="3">Belongs to the V-ATPase proteolipid subunit family.</text>
</comment>
<dbReference type="EMBL" id="M73232">
    <property type="protein sequence ID" value="AAA32712.1"/>
    <property type="molecule type" value="mRNA"/>
</dbReference>
<dbReference type="PIR" id="A40814">
    <property type="entry name" value="A40814"/>
</dbReference>
<dbReference type="SMR" id="P23957"/>
<dbReference type="EnsemblPlants" id="AVESA.00001b.r3.1Dg0002375.3">
    <property type="protein sequence ID" value="cds.AVESA.00001b.r3.1Dg0002375.3"/>
    <property type="gene ID" value="AVESA.00001b.r3.1Dg0002375"/>
</dbReference>
<dbReference type="EnsemblPlants" id="AVESA.00001b.r3.1Dg0002375.4">
    <property type="protein sequence ID" value="cds.AVESA.00001b.r3.1Dg0002375.4"/>
    <property type="gene ID" value="AVESA.00001b.r3.1Dg0002375"/>
</dbReference>
<dbReference type="EnsemblPlants" id="AVESA.00001b.r3.3Dg0002726.1">
    <property type="protein sequence ID" value="cds.AVESA.00001b.r3.3Dg0002726.1"/>
    <property type="gene ID" value="AVESA.00001b.r3.3Dg0002726"/>
</dbReference>
<dbReference type="EnsemblPlants" id="AVESA.00001b.r3.5Cg0001205.1">
    <property type="protein sequence ID" value="cds.AVESA.00001b.r3.5Cg0001205.1"/>
    <property type="gene ID" value="AVESA.00001b.r3.5Cg0001205"/>
</dbReference>
<dbReference type="EnsemblPlants" id="AVESA.00010b.r2.4AG0590420.1">
    <property type="protein sequence ID" value="AVESA.00010b.r2.4AG0590420.1.CDS"/>
    <property type="gene ID" value="AVESA.00010b.r2.4AG0590420"/>
</dbReference>
<dbReference type="EnsemblPlants" id="AVESA.00010b.r2.4DG0734750.1">
    <property type="protein sequence ID" value="AVESA.00010b.r2.4DG0734750.1.CDS"/>
    <property type="gene ID" value="AVESA.00010b.r2.4DG0734750"/>
</dbReference>
<dbReference type="EnsemblPlants" id="AVESA.00010b.r2.5CG0906930.1">
    <property type="protein sequence ID" value="AVESA.00010b.r2.5CG0906930.1.CDS"/>
    <property type="gene ID" value="AVESA.00010b.r2.5CG0906930"/>
</dbReference>
<dbReference type="EnsemblPlants" id="AVESA.00010b.r2.5DG0980130.1">
    <property type="protein sequence ID" value="AVESA.00010b.r2.5DG0980130.1.CDS"/>
    <property type="gene ID" value="AVESA.00010b.r2.5DG0980130"/>
</dbReference>
<dbReference type="EnsemblPlants" id="AVESA.00010b.r2.7CG0685240.1">
    <property type="protein sequence ID" value="AVESA.00010b.r2.7CG0685240.1.CDS"/>
    <property type="gene ID" value="AVESA.00010b.r2.7CG0685240"/>
</dbReference>
<dbReference type="EnsemblPlants" id="AVESA.00010b.r2.UnG1400920.1">
    <property type="protein sequence ID" value="AVESA.00010b.r2.UnG1400920.1.CDS"/>
    <property type="gene ID" value="AVESA.00010b.r2.UnG1400920"/>
</dbReference>
<dbReference type="Gramene" id="AVESA.00001b.r3.1Dg0002375.3">
    <property type="protein sequence ID" value="cds.AVESA.00001b.r3.1Dg0002375.3"/>
    <property type="gene ID" value="AVESA.00001b.r3.1Dg0002375"/>
</dbReference>
<dbReference type="Gramene" id="AVESA.00001b.r3.1Dg0002375.4">
    <property type="protein sequence ID" value="cds.AVESA.00001b.r3.1Dg0002375.4"/>
    <property type="gene ID" value="AVESA.00001b.r3.1Dg0002375"/>
</dbReference>
<dbReference type="Gramene" id="AVESA.00001b.r3.3Dg0002726.1">
    <property type="protein sequence ID" value="cds.AVESA.00001b.r3.3Dg0002726.1"/>
    <property type="gene ID" value="AVESA.00001b.r3.3Dg0002726"/>
</dbReference>
<dbReference type="Gramene" id="AVESA.00001b.r3.5Cg0001205.1">
    <property type="protein sequence ID" value="cds.AVESA.00001b.r3.5Cg0001205.1"/>
    <property type="gene ID" value="AVESA.00001b.r3.5Cg0001205"/>
</dbReference>
<dbReference type="Gramene" id="AVESA.00010b.r2.4AG0590420.1">
    <property type="protein sequence ID" value="AVESA.00010b.r2.4AG0590420.1.CDS"/>
    <property type="gene ID" value="AVESA.00010b.r2.4AG0590420"/>
</dbReference>
<dbReference type="Gramene" id="AVESA.00010b.r2.4DG0734750.1">
    <property type="protein sequence ID" value="AVESA.00010b.r2.4DG0734750.1.CDS"/>
    <property type="gene ID" value="AVESA.00010b.r2.4DG0734750"/>
</dbReference>
<dbReference type="Gramene" id="AVESA.00010b.r2.5CG0906930.1">
    <property type="protein sequence ID" value="AVESA.00010b.r2.5CG0906930.1.CDS"/>
    <property type="gene ID" value="AVESA.00010b.r2.5CG0906930"/>
</dbReference>
<dbReference type="Gramene" id="AVESA.00010b.r2.5DG0980130.1">
    <property type="protein sequence ID" value="AVESA.00010b.r2.5DG0980130.1.CDS"/>
    <property type="gene ID" value="AVESA.00010b.r2.5DG0980130"/>
</dbReference>
<dbReference type="Gramene" id="AVESA.00010b.r2.7CG0685240.1">
    <property type="protein sequence ID" value="AVESA.00010b.r2.7CG0685240.1.CDS"/>
    <property type="gene ID" value="AVESA.00010b.r2.7CG0685240"/>
</dbReference>
<dbReference type="Gramene" id="AVESA.00010b.r2.UnG1400920.1">
    <property type="protein sequence ID" value="AVESA.00010b.r2.UnG1400920.1.CDS"/>
    <property type="gene ID" value="AVESA.00010b.r2.UnG1400920"/>
</dbReference>
<dbReference type="GO" id="GO:0033179">
    <property type="term" value="C:proton-transporting V-type ATPase, V0 domain"/>
    <property type="evidence" value="ECO:0007669"/>
    <property type="project" value="InterPro"/>
</dbReference>
<dbReference type="GO" id="GO:0005774">
    <property type="term" value="C:vacuolar membrane"/>
    <property type="evidence" value="ECO:0007669"/>
    <property type="project" value="UniProtKB-SubCell"/>
</dbReference>
<dbReference type="GO" id="GO:0046961">
    <property type="term" value="F:proton-transporting ATPase activity, rotational mechanism"/>
    <property type="evidence" value="ECO:0007669"/>
    <property type="project" value="InterPro"/>
</dbReference>
<dbReference type="CDD" id="cd18175">
    <property type="entry name" value="ATP-synt_Vo_c_ATP6C_rpt1"/>
    <property type="match status" value="1"/>
</dbReference>
<dbReference type="CDD" id="cd18176">
    <property type="entry name" value="ATP-synt_Vo_c_ATP6C_rpt2"/>
    <property type="match status" value="1"/>
</dbReference>
<dbReference type="FunFam" id="1.20.120.610:FF:000003">
    <property type="entry name" value="V-type proton ATPase proteolipid subunit"/>
    <property type="match status" value="1"/>
</dbReference>
<dbReference type="Gene3D" id="1.20.120.610">
    <property type="entry name" value="lithium bound rotor ring of v- atpase"/>
    <property type="match status" value="1"/>
</dbReference>
<dbReference type="InterPro" id="IPR002379">
    <property type="entry name" value="ATPase_proteolipid_c-like_dom"/>
</dbReference>
<dbReference type="InterPro" id="IPR000245">
    <property type="entry name" value="ATPase_proteolipid_csu"/>
</dbReference>
<dbReference type="InterPro" id="IPR011555">
    <property type="entry name" value="ATPase_proteolipid_su_C_euk"/>
</dbReference>
<dbReference type="InterPro" id="IPR035921">
    <property type="entry name" value="F/V-ATP_Csub_sf"/>
</dbReference>
<dbReference type="NCBIfam" id="TIGR01100">
    <property type="entry name" value="V_ATP_synt_C"/>
    <property type="match status" value="1"/>
</dbReference>
<dbReference type="PANTHER" id="PTHR10263">
    <property type="entry name" value="V-TYPE PROTON ATPASE PROTEOLIPID SUBUNIT"/>
    <property type="match status" value="1"/>
</dbReference>
<dbReference type="Pfam" id="PF00137">
    <property type="entry name" value="ATP-synt_C"/>
    <property type="match status" value="2"/>
</dbReference>
<dbReference type="PRINTS" id="PR00122">
    <property type="entry name" value="VACATPASE"/>
</dbReference>
<dbReference type="SUPFAM" id="SSF81333">
    <property type="entry name" value="F1F0 ATP synthase subunit C"/>
    <property type="match status" value="2"/>
</dbReference>
<sequence length="165" mass="16621">MSSVFSGDETAPFFGFLGAAAALVFSCMGAAYGTAKSGVGVASMGVMRPELVMKSIVPVVMAGVLGIYGLIIAVIISTGINPKAKPYFLFDGYAHLSSGLACGLAGLAAGMAIGIVGDAGVRANAQQPKLFVGMILILIFAEALALYGLIVGIILSSRAGQSRAD</sequence>
<organism>
    <name type="scientific">Avena sativa</name>
    <name type="common">Oat</name>
    <dbReference type="NCBI Taxonomy" id="4498"/>
    <lineage>
        <taxon>Eukaryota</taxon>
        <taxon>Viridiplantae</taxon>
        <taxon>Streptophyta</taxon>
        <taxon>Embryophyta</taxon>
        <taxon>Tracheophyta</taxon>
        <taxon>Spermatophyta</taxon>
        <taxon>Magnoliopsida</taxon>
        <taxon>Liliopsida</taxon>
        <taxon>Poales</taxon>
        <taxon>Poaceae</taxon>
        <taxon>BOP clade</taxon>
        <taxon>Pooideae</taxon>
        <taxon>Poodae</taxon>
        <taxon>Poeae</taxon>
        <taxon>Poeae Chloroplast Group 1 (Aveneae type)</taxon>
        <taxon>Aveninae</taxon>
        <taxon>Avena</taxon>
    </lineage>
</organism>
<feature type="chain" id="PRO_0000071766" description="V-type proton ATPase 16 kDa proteolipid subunit">
    <location>
        <begin position="1"/>
        <end position="165"/>
    </location>
</feature>
<feature type="topological domain" description="Lumenal" evidence="2">
    <location>
        <begin position="1"/>
        <end position="10"/>
    </location>
</feature>
<feature type="transmembrane region" description="Helical" evidence="2">
    <location>
        <begin position="11"/>
        <end position="33"/>
    </location>
</feature>
<feature type="topological domain" description="Cytoplasmic" evidence="2">
    <location>
        <begin position="34"/>
        <end position="55"/>
    </location>
</feature>
<feature type="transmembrane region" description="Helical" evidence="2">
    <location>
        <begin position="56"/>
        <end position="76"/>
    </location>
</feature>
<feature type="topological domain" description="Lumenal" evidence="2">
    <location>
        <begin position="77"/>
        <end position="95"/>
    </location>
</feature>
<feature type="transmembrane region" description="Helical" evidence="2">
    <location>
        <begin position="96"/>
        <end position="117"/>
    </location>
</feature>
<feature type="topological domain" description="Cytoplasmic" evidence="2">
    <location>
        <begin position="118"/>
        <end position="129"/>
    </location>
</feature>
<feature type="transmembrane region" description="Helical" evidence="2">
    <location>
        <begin position="130"/>
        <end position="155"/>
    </location>
</feature>
<feature type="topological domain" description="Lumenal" evidence="2">
    <location>
        <begin position="156"/>
        <end position="165"/>
    </location>
</feature>
<feature type="site" description="Essential for proton translocation" evidence="1">
    <location>
        <position position="142"/>
    </location>
</feature>
<feature type="sequence variant" description="In clone 12.">
    <original>T</original>
    <variation>P</variation>
    <location>
        <position position="78"/>
    </location>
</feature>
<feature type="sequence variant" description="In clone 12.">
    <original>L</original>
    <variation>P</variation>
    <location>
        <position position="89"/>
    </location>
</feature>
<feature type="sequence variant" description="In clone 93.">
    <original>A</original>
    <variation>V</variation>
    <location>
        <position position="164"/>
    </location>
</feature>
<name>VATL_AVESA</name>
<protein>
    <recommendedName>
        <fullName>V-type proton ATPase 16 kDa proteolipid subunit</fullName>
        <shortName>V-ATPase 16 kDa proteolipid subunit</shortName>
    </recommendedName>
    <alternativeName>
        <fullName>Vacuolar proton pump 16 kDa proteolipid subunit</fullName>
    </alternativeName>
</protein>
<accession>P23957</accession>
<proteinExistence type="evidence at transcript level"/>
<keyword id="KW-0375">Hydrogen ion transport</keyword>
<keyword id="KW-0406">Ion transport</keyword>
<keyword id="KW-0472">Membrane</keyword>
<keyword id="KW-0812">Transmembrane</keyword>
<keyword id="KW-1133">Transmembrane helix</keyword>
<keyword id="KW-0813">Transport</keyword>
<keyword id="KW-0926">Vacuole</keyword>
<reference key="1">
    <citation type="journal article" date="1991" name="J. Biol. Chem.">
        <title>Molecular cloning and sequencing of cDNAs encoding the proteolipid subunit of the vacuolar H(+)-ATPase from a higher plant.</title>
        <authorList>
            <person name="Lai S."/>
            <person name="Watson J.C."/>
            <person name="Hansen J.N."/>
            <person name="Sze H."/>
        </authorList>
    </citation>
    <scope>NUCLEOTIDE SEQUENCE [MRNA]</scope>
    <source>
        <strain>cv. Lang</strain>
    </source>
</reference>
<evidence type="ECO:0000250" key="1"/>
<evidence type="ECO:0000255" key="2"/>
<evidence type="ECO:0000305" key="3"/>